<organism>
    <name type="scientific">Mycobacterium bovis (strain ATCC BAA-935 / AF2122/97)</name>
    <dbReference type="NCBI Taxonomy" id="233413"/>
    <lineage>
        <taxon>Bacteria</taxon>
        <taxon>Bacillati</taxon>
        <taxon>Actinomycetota</taxon>
        <taxon>Actinomycetes</taxon>
        <taxon>Mycobacteriales</taxon>
        <taxon>Mycobacteriaceae</taxon>
        <taxon>Mycobacterium</taxon>
        <taxon>Mycobacterium tuberculosis complex</taxon>
    </lineage>
</organism>
<accession>P67657</accession>
<accession>A0A1R3XUC8</accession>
<accession>Q10889</accession>
<accession>X2BE00</accession>
<name>MTNN_MYCBO</name>
<evidence type="ECO:0000250" key="1">
    <source>
        <dbReference type="UniProtKB" id="P0AF12"/>
    </source>
</evidence>
<evidence type="ECO:0000305" key="2"/>
<sequence length="255" mass="27340">MAVTVGVICAIPQELAYLRGVLVDAKRQQVAQILFDSGQLDAHRVVLAAAGMGKVNTGLTATLLADRFGCRTIVFTGVAGGLDPELCIGDIVIADRVVQHDFGLLTDERLRPYQPGHIPFIEPTERLGYPVDPAVIDRVKHRLDGFTLAPLSTAAGGGGRQPRIYYGTILTGDQYLHCERTRNRLHHELGGMAVEMEGGAVAQICASFDIPWLVIRALSDLAGADSGVDFNRFVGEVAASSARVLLRLLPVLTAC</sequence>
<dbReference type="EC" id="3.2.2.9" evidence="1"/>
<dbReference type="EMBL" id="LT708304">
    <property type="protein sequence ID" value="SIT98490.1"/>
    <property type="molecule type" value="Genomic_DNA"/>
</dbReference>
<dbReference type="RefSeq" id="NP_853762.1">
    <property type="nucleotide sequence ID" value="NC_002945.3"/>
</dbReference>
<dbReference type="RefSeq" id="WP_003400678.1">
    <property type="nucleotide sequence ID" value="NC_002945.4"/>
</dbReference>
<dbReference type="SMR" id="P67657"/>
<dbReference type="PATRIC" id="fig|233413.5.peg.106"/>
<dbReference type="UniPathway" id="UPA00904">
    <property type="reaction ID" value="UER00871"/>
</dbReference>
<dbReference type="Proteomes" id="UP000001419">
    <property type="component" value="Chromosome"/>
</dbReference>
<dbReference type="GO" id="GO:0005829">
    <property type="term" value="C:cytosol"/>
    <property type="evidence" value="ECO:0007669"/>
    <property type="project" value="TreeGrafter"/>
</dbReference>
<dbReference type="GO" id="GO:0008782">
    <property type="term" value="F:adenosylhomocysteine nucleosidase activity"/>
    <property type="evidence" value="ECO:0007669"/>
    <property type="project" value="UniProtKB-EC"/>
</dbReference>
<dbReference type="GO" id="GO:0008930">
    <property type="term" value="F:methylthioadenosine nucleosidase activity"/>
    <property type="evidence" value="ECO:0007669"/>
    <property type="project" value="RHEA"/>
</dbReference>
<dbReference type="GO" id="GO:0019509">
    <property type="term" value="P:L-methionine salvage from methylthioadenosine"/>
    <property type="evidence" value="ECO:0007669"/>
    <property type="project" value="UniProtKB-UniPathway"/>
</dbReference>
<dbReference type="GO" id="GO:0019284">
    <property type="term" value="P:L-methionine salvage from S-adenosylmethionine"/>
    <property type="evidence" value="ECO:0007669"/>
    <property type="project" value="TreeGrafter"/>
</dbReference>
<dbReference type="GO" id="GO:0009116">
    <property type="term" value="P:nucleoside metabolic process"/>
    <property type="evidence" value="ECO:0007669"/>
    <property type="project" value="InterPro"/>
</dbReference>
<dbReference type="CDD" id="cd09008">
    <property type="entry name" value="MTAN"/>
    <property type="match status" value="1"/>
</dbReference>
<dbReference type="Gene3D" id="3.40.50.1580">
    <property type="entry name" value="Nucleoside phosphorylase domain"/>
    <property type="match status" value="1"/>
</dbReference>
<dbReference type="InterPro" id="IPR000845">
    <property type="entry name" value="Nucleoside_phosphorylase_d"/>
</dbReference>
<dbReference type="InterPro" id="IPR035994">
    <property type="entry name" value="Nucleoside_phosphorylase_sf"/>
</dbReference>
<dbReference type="NCBIfam" id="NF004079">
    <property type="entry name" value="PRK05584.1"/>
    <property type="match status" value="1"/>
</dbReference>
<dbReference type="PANTHER" id="PTHR46832">
    <property type="entry name" value="5'-METHYLTHIOADENOSINE/S-ADENOSYLHOMOCYSTEINE NUCLEOSIDASE"/>
    <property type="match status" value="1"/>
</dbReference>
<dbReference type="PANTHER" id="PTHR46832:SF1">
    <property type="entry name" value="5'-METHYLTHIOADENOSINE_S-ADENOSYLHOMOCYSTEINE NUCLEOSIDASE"/>
    <property type="match status" value="1"/>
</dbReference>
<dbReference type="Pfam" id="PF01048">
    <property type="entry name" value="PNP_UDP_1"/>
    <property type="match status" value="1"/>
</dbReference>
<dbReference type="SUPFAM" id="SSF53167">
    <property type="entry name" value="Purine and uridine phosphorylases"/>
    <property type="match status" value="1"/>
</dbReference>
<comment type="function">
    <text evidence="1">Catalyzes the irreversible cleavage of the glycosidic bond in both 5'-methylthioadenosine (MTA) and S-adenosylhomocysteine (SAH/AdoHcy) to adenine and the corresponding thioribose, 5'-methylthioribose and S-ribosylhomocysteine, respectively. Also cleaves 5'-deoxyadenosine, a toxic by-product of radical S-adenosylmethionine (SAM) enzymes, into 5-deoxyribose and adenine.</text>
</comment>
<comment type="catalytic activity">
    <reaction evidence="1">
        <text>S-adenosyl-L-homocysteine + H2O = S-(5-deoxy-D-ribos-5-yl)-L-homocysteine + adenine</text>
        <dbReference type="Rhea" id="RHEA:17805"/>
        <dbReference type="ChEBI" id="CHEBI:15377"/>
        <dbReference type="ChEBI" id="CHEBI:16708"/>
        <dbReference type="ChEBI" id="CHEBI:57856"/>
        <dbReference type="ChEBI" id="CHEBI:58195"/>
        <dbReference type="EC" id="3.2.2.9"/>
    </reaction>
</comment>
<comment type="catalytic activity">
    <reaction evidence="1">
        <text>S-methyl-5'-thioadenosine + H2O = 5-(methylsulfanyl)-D-ribose + adenine</text>
        <dbReference type="Rhea" id="RHEA:13617"/>
        <dbReference type="ChEBI" id="CHEBI:15377"/>
        <dbReference type="ChEBI" id="CHEBI:16708"/>
        <dbReference type="ChEBI" id="CHEBI:17509"/>
        <dbReference type="ChEBI" id="CHEBI:78440"/>
        <dbReference type="EC" id="3.2.2.9"/>
    </reaction>
</comment>
<comment type="catalytic activity">
    <reaction evidence="1">
        <text>5'-deoxyadenosine + H2O = 5-deoxy-D-ribose + adenine</text>
        <dbReference type="Rhea" id="RHEA:29859"/>
        <dbReference type="ChEBI" id="CHEBI:15377"/>
        <dbReference type="ChEBI" id="CHEBI:16708"/>
        <dbReference type="ChEBI" id="CHEBI:17319"/>
        <dbReference type="ChEBI" id="CHEBI:149540"/>
        <dbReference type="EC" id="3.2.2.9"/>
    </reaction>
    <physiologicalReaction direction="left-to-right" evidence="1">
        <dbReference type="Rhea" id="RHEA:29860"/>
    </physiologicalReaction>
</comment>
<comment type="pathway">
    <text evidence="1">Amino-acid biosynthesis; L-methionine biosynthesis via salvage pathway; S-methyl-5-thio-alpha-D-ribose 1-phosphate from S-methyl-5'-thioadenosine (hydrolase route): step 1/2.</text>
</comment>
<comment type="similarity">
    <text evidence="2">Belongs to the PNP/UDP phosphorylase family. MtnN subfamily.</text>
</comment>
<keyword id="KW-0028">Amino-acid biosynthesis</keyword>
<keyword id="KW-0378">Hydrolase</keyword>
<keyword id="KW-0486">Methionine biosynthesis</keyword>
<keyword id="KW-1185">Reference proteome</keyword>
<gene>
    <name type="primary">mtnN</name>
    <name type="synonym">mtn</name>
    <name type="ordered locus">BQ2027_MB0094</name>
</gene>
<feature type="chain" id="PRO_0000164445" description="5'-methylthioadenosine/S-adenosylhomocysteine nucleosidase">
    <location>
        <begin position="1"/>
        <end position="255"/>
    </location>
</feature>
<feature type="active site" description="Proton acceptor" evidence="1">
    <location>
        <position position="14"/>
    </location>
</feature>
<feature type="active site" description="Proton donor" evidence="1">
    <location>
        <position position="220"/>
    </location>
</feature>
<feature type="binding site" evidence="1">
    <location>
        <position position="80"/>
    </location>
    <ligand>
        <name>substrate</name>
    </ligand>
</feature>
<feature type="binding site" evidence="1">
    <location>
        <position position="176"/>
    </location>
    <ligand>
        <name>substrate</name>
    </ligand>
</feature>
<feature type="binding site" evidence="1">
    <location>
        <begin position="196"/>
        <end position="197"/>
    </location>
    <ligand>
        <name>substrate</name>
    </ligand>
</feature>
<protein>
    <recommendedName>
        <fullName evidence="1">5'-methylthioadenosine/S-adenosylhomocysteine nucleosidase</fullName>
        <shortName evidence="1">MTA/SAH nucleosidase</shortName>
        <shortName evidence="1">MTAN</shortName>
        <ecNumber evidence="1">3.2.2.9</ecNumber>
    </recommendedName>
    <alternativeName>
        <fullName evidence="1">5'-deoxyadenosine nucleosidase</fullName>
        <shortName evidence="1">DOA nucleosidase</shortName>
        <shortName evidence="1">dAdo nucleosidase</shortName>
    </alternativeName>
    <alternativeName>
        <fullName evidence="1">5'-methylthioadenosine nucleosidase</fullName>
        <shortName evidence="1">MTA nucleosidase</shortName>
    </alternativeName>
    <alternativeName>
        <fullName evidence="1">S-adenosylhomocysteine nucleosidase</fullName>
        <shortName evidence="1">AdoHcy nucleosidase</shortName>
        <shortName evidence="1">SAH nucleosidase</shortName>
        <shortName evidence="1">SRH nucleosidase</shortName>
    </alternativeName>
</protein>
<reference key="1">
    <citation type="journal article" date="2003" name="Proc. Natl. Acad. Sci. U.S.A.">
        <title>The complete genome sequence of Mycobacterium bovis.</title>
        <authorList>
            <person name="Garnier T."/>
            <person name="Eiglmeier K."/>
            <person name="Camus J.-C."/>
            <person name="Medina N."/>
            <person name="Mansoor H."/>
            <person name="Pryor M."/>
            <person name="Duthoy S."/>
            <person name="Grondin S."/>
            <person name="Lacroix C."/>
            <person name="Monsempe C."/>
            <person name="Simon S."/>
            <person name="Harris B."/>
            <person name="Atkin R."/>
            <person name="Doggett J."/>
            <person name="Mayes R."/>
            <person name="Keating L."/>
            <person name="Wheeler P.R."/>
            <person name="Parkhill J."/>
            <person name="Barrell B.G."/>
            <person name="Cole S.T."/>
            <person name="Gordon S.V."/>
            <person name="Hewinson R.G."/>
        </authorList>
    </citation>
    <scope>NUCLEOTIDE SEQUENCE [LARGE SCALE GENOMIC DNA]</scope>
    <source>
        <strain>ATCC BAA-935 / AF2122/97</strain>
    </source>
</reference>
<reference key="2">
    <citation type="journal article" date="2017" name="Genome Announc.">
        <title>Updated reference genome sequence and annotation of Mycobacterium bovis AF2122/97.</title>
        <authorList>
            <person name="Malone K.M."/>
            <person name="Farrell D."/>
            <person name="Stuber T.P."/>
            <person name="Schubert O.T."/>
            <person name="Aebersold R."/>
            <person name="Robbe-Austerman S."/>
            <person name="Gordon S.V."/>
        </authorList>
    </citation>
    <scope>NUCLEOTIDE SEQUENCE [LARGE SCALE GENOMIC DNA]</scope>
    <scope>GENOME REANNOTATION</scope>
    <source>
        <strain>ATCC BAA-935 / AF2122/97</strain>
    </source>
</reference>
<proteinExistence type="inferred from homology"/>